<gene>
    <name type="primary">get3</name>
    <name type="ORF">AN2909</name>
</gene>
<name>GET3_EMENI</name>
<proteinExistence type="inferred from homology"/>
<reference key="1">
    <citation type="journal article" date="2005" name="Nature">
        <title>Sequencing of Aspergillus nidulans and comparative analysis with A. fumigatus and A. oryzae.</title>
        <authorList>
            <person name="Galagan J.E."/>
            <person name="Calvo S.E."/>
            <person name="Cuomo C."/>
            <person name="Ma L.-J."/>
            <person name="Wortman J.R."/>
            <person name="Batzoglou S."/>
            <person name="Lee S.-I."/>
            <person name="Bastuerkmen M."/>
            <person name="Spevak C.C."/>
            <person name="Clutterbuck J."/>
            <person name="Kapitonov V."/>
            <person name="Jurka J."/>
            <person name="Scazzocchio C."/>
            <person name="Farman M.L."/>
            <person name="Butler J."/>
            <person name="Purcell S."/>
            <person name="Harris S."/>
            <person name="Braus G.H."/>
            <person name="Draht O."/>
            <person name="Busch S."/>
            <person name="D'Enfert C."/>
            <person name="Bouchier C."/>
            <person name="Goldman G.H."/>
            <person name="Bell-Pedersen D."/>
            <person name="Griffiths-Jones S."/>
            <person name="Doonan J.H."/>
            <person name="Yu J."/>
            <person name="Vienken K."/>
            <person name="Pain A."/>
            <person name="Freitag M."/>
            <person name="Selker E.U."/>
            <person name="Archer D.B."/>
            <person name="Penalva M.A."/>
            <person name="Oakley B.R."/>
            <person name="Momany M."/>
            <person name="Tanaka T."/>
            <person name="Kumagai T."/>
            <person name="Asai K."/>
            <person name="Machida M."/>
            <person name="Nierman W.C."/>
            <person name="Denning D.W."/>
            <person name="Caddick M.X."/>
            <person name="Hynes M."/>
            <person name="Paoletti M."/>
            <person name="Fischer R."/>
            <person name="Miller B.L."/>
            <person name="Dyer P.S."/>
            <person name="Sachs M.S."/>
            <person name="Osmani S.A."/>
            <person name="Birren B.W."/>
        </authorList>
    </citation>
    <scope>NUCLEOTIDE SEQUENCE [LARGE SCALE GENOMIC DNA]</scope>
    <source>
        <strain>FGSC A4 / ATCC 38163 / CBS 112.46 / NRRL 194 / M139</strain>
    </source>
</reference>
<reference key="2">
    <citation type="journal article" date="2009" name="Fungal Genet. Biol.">
        <title>The 2008 update of the Aspergillus nidulans genome annotation: a community effort.</title>
        <authorList>
            <person name="Wortman J.R."/>
            <person name="Gilsenan J.M."/>
            <person name="Joardar V."/>
            <person name="Deegan J."/>
            <person name="Clutterbuck J."/>
            <person name="Andersen M.R."/>
            <person name="Archer D."/>
            <person name="Bencina M."/>
            <person name="Braus G."/>
            <person name="Coutinho P."/>
            <person name="von Dohren H."/>
            <person name="Doonan J."/>
            <person name="Driessen A.J."/>
            <person name="Durek P."/>
            <person name="Espeso E."/>
            <person name="Fekete E."/>
            <person name="Flipphi M."/>
            <person name="Estrada C.G."/>
            <person name="Geysens S."/>
            <person name="Goldman G."/>
            <person name="de Groot P.W."/>
            <person name="Hansen K."/>
            <person name="Harris S.D."/>
            <person name="Heinekamp T."/>
            <person name="Helmstaedt K."/>
            <person name="Henrissat B."/>
            <person name="Hofmann G."/>
            <person name="Homan T."/>
            <person name="Horio T."/>
            <person name="Horiuchi H."/>
            <person name="James S."/>
            <person name="Jones M."/>
            <person name="Karaffa L."/>
            <person name="Karanyi Z."/>
            <person name="Kato M."/>
            <person name="Keller N."/>
            <person name="Kelly D.E."/>
            <person name="Kiel J.A."/>
            <person name="Kim J.M."/>
            <person name="van der Klei I.J."/>
            <person name="Klis F.M."/>
            <person name="Kovalchuk A."/>
            <person name="Krasevec N."/>
            <person name="Kubicek C.P."/>
            <person name="Liu B."/>
            <person name="Maccabe A."/>
            <person name="Meyer V."/>
            <person name="Mirabito P."/>
            <person name="Miskei M."/>
            <person name="Mos M."/>
            <person name="Mullins J."/>
            <person name="Nelson D.R."/>
            <person name="Nielsen J."/>
            <person name="Oakley B.R."/>
            <person name="Osmani S.A."/>
            <person name="Pakula T."/>
            <person name="Paszewski A."/>
            <person name="Paulsen I."/>
            <person name="Pilsyk S."/>
            <person name="Pocsi I."/>
            <person name="Punt P.J."/>
            <person name="Ram A.F."/>
            <person name="Ren Q."/>
            <person name="Robellet X."/>
            <person name="Robson G."/>
            <person name="Seiboth B."/>
            <person name="van Solingen P."/>
            <person name="Specht T."/>
            <person name="Sun J."/>
            <person name="Taheri-Talesh N."/>
            <person name="Takeshita N."/>
            <person name="Ussery D."/>
            <person name="vanKuyk P.A."/>
            <person name="Visser H."/>
            <person name="van de Vondervoort P.J."/>
            <person name="de Vries R.P."/>
            <person name="Walton J."/>
            <person name="Xiang X."/>
            <person name="Xiong Y."/>
            <person name="Zeng A.P."/>
            <person name="Brandt B.W."/>
            <person name="Cornell M.J."/>
            <person name="van den Hondel C.A."/>
            <person name="Visser J."/>
            <person name="Oliver S.G."/>
            <person name="Turner G."/>
        </authorList>
    </citation>
    <scope>GENOME REANNOTATION</scope>
    <source>
        <strain>FGSC A4 / ATCC 38163 / CBS 112.46 / NRRL 194 / M139</strain>
    </source>
</reference>
<comment type="function">
    <text evidence="1">ATPase required for the post-translational delivery of tail-anchored (TA) proteins to the endoplasmic reticulum. Recognizes and selectively binds the transmembrane domain of TA proteins in the cytosol. This complex then targets to the endoplasmic reticulum by membrane-bound receptors, where the tail-anchored protein is released for insertion. This process is regulated by ATP binding and hydrolysis. ATP binding drives the homodimer towards the closed dimer state, facilitating recognition of newly synthesized TA membrane proteins. ATP hydrolysis is required for insertion. Subsequently, the homodimer reverts towards the open dimer state, lowering its affinity for the membrane-bound receptor, and returning it to the cytosol to initiate a new round of targeting.</text>
</comment>
<comment type="subunit">
    <text evidence="1">Homodimer.</text>
</comment>
<comment type="subcellular location">
    <subcellularLocation>
        <location evidence="1">Cytoplasm</location>
    </subcellularLocation>
    <subcellularLocation>
        <location evidence="1">Endoplasmic reticulum</location>
    </subcellularLocation>
</comment>
<comment type="similarity">
    <text evidence="1">Belongs to the arsA ATPase family.</text>
</comment>
<organism>
    <name type="scientific">Emericella nidulans (strain FGSC A4 / ATCC 38163 / CBS 112.46 / NRRL 194 / M139)</name>
    <name type="common">Aspergillus nidulans</name>
    <dbReference type="NCBI Taxonomy" id="227321"/>
    <lineage>
        <taxon>Eukaryota</taxon>
        <taxon>Fungi</taxon>
        <taxon>Dikarya</taxon>
        <taxon>Ascomycota</taxon>
        <taxon>Pezizomycotina</taxon>
        <taxon>Eurotiomycetes</taxon>
        <taxon>Eurotiomycetidae</taxon>
        <taxon>Eurotiales</taxon>
        <taxon>Aspergillaceae</taxon>
        <taxon>Aspergillus</taxon>
        <taxon>Aspergillus subgen. Nidulantes</taxon>
    </lineage>
</organism>
<keyword id="KW-0067">ATP-binding</keyword>
<keyword id="KW-0963">Cytoplasm</keyword>
<keyword id="KW-0256">Endoplasmic reticulum</keyword>
<keyword id="KW-0378">Hydrolase</keyword>
<keyword id="KW-0479">Metal-binding</keyword>
<keyword id="KW-0547">Nucleotide-binding</keyword>
<keyword id="KW-1185">Reference proteome</keyword>
<keyword id="KW-0813">Transport</keyword>
<keyword id="KW-0862">Zinc</keyword>
<evidence type="ECO:0000255" key="1">
    <source>
        <dbReference type="HAMAP-Rule" id="MF_03112"/>
    </source>
</evidence>
<accession>Q5B971</accession>
<accession>C8VJ74</accession>
<sequence length="340" mass="37539">MSSTAIVHDDDLMEPTLQSIVNQKTLRWIFVGGKGGVGKTTTSCSLAIQLAKARKSVLLISTDPAHNLSDAFGQKFGKEARLVDGFTNLSAMEVDPNGSLQDLLANGEGQGDDPMAGLGVGNMMQDLAFSIPGVDEAMSFAEVLKQVKSLSYEVIVFDTAPTGHTLRFLQFPTVLEKALAKLSQLSSQFGPMLNSILGARGGLPGGQNLDELLQKMESLRETIGEVNTQFKNPDMTTFVCVCIAEFLSLYETERMIQELTSYQIDTHAIVVNQLLFPKQGSDCEQCNARRKMQKKYLEQIEELYEDFNVVRMPLLVEEVRGKEKLEKFSDMLINPYVPPN</sequence>
<dbReference type="EC" id="3.6.-.-" evidence="1"/>
<dbReference type="EMBL" id="AACD01000051">
    <property type="protein sequence ID" value="EAA63480.1"/>
    <property type="molecule type" value="Genomic_DNA"/>
</dbReference>
<dbReference type="EMBL" id="BN001306">
    <property type="protein sequence ID" value="CBF83769.1"/>
    <property type="molecule type" value="Genomic_DNA"/>
</dbReference>
<dbReference type="RefSeq" id="XP_660513.1">
    <property type="nucleotide sequence ID" value="XM_655421.1"/>
</dbReference>
<dbReference type="SMR" id="Q5B971"/>
<dbReference type="FunCoup" id="Q5B971">
    <property type="interactions" value="961"/>
</dbReference>
<dbReference type="STRING" id="227321.Q5B971"/>
<dbReference type="EnsemblFungi" id="CBF83769">
    <property type="protein sequence ID" value="CBF83769"/>
    <property type="gene ID" value="ANIA_02909"/>
</dbReference>
<dbReference type="KEGG" id="ani:ANIA_02909"/>
<dbReference type="VEuPathDB" id="FungiDB:AN2909"/>
<dbReference type="eggNOG" id="KOG2825">
    <property type="taxonomic scope" value="Eukaryota"/>
</dbReference>
<dbReference type="HOGENOM" id="CLU_040761_0_0_1"/>
<dbReference type="InParanoid" id="Q5B971"/>
<dbReference type="OMA" id="MDAPYEF"/>
<dbReference type="OrthoDB" id="1770at2759"/>
<dbReference type="Proteomes" id="UP000000560">
    <property type="component" value="Chromosome VI"/>
</dbReference>
<dbReference type="GO" id="GO:0043529">
    <property type="term" value="C:GET complex"/>
    <property type="evidence" value="ECO:0000318"/>
    <property type="project" value="GO_Central"/>
</dbReference>
<dbReference type="GO" id="GO:0005524">
    <property type="term" value="F:ATP binding"/>
    <property type="evidence" value="ECO:0007669"/>
    <property type="project" value="UniProtKB-UniRule"/>
</dbReference>
<dbReference type="GO" id="GO:0016887">
    <property type="term" value="F:ATP hydrolysis activity"/>
    <property type="evidence" value="ECO:0000318"/>
    <property type="project" value="GO_Central"/>
</dbReference>
<dbReference type="GO" id="GO:0005085">
    <property type="term" value="F:guanyl-nucleotide exchange factor activity"/>
    <property type="evidence" value="ECO:0007669"/>
    <property type="project" value="EnsemblFungi"/>
</dbReference>
<dbReference type="GO" id="GO:0042802">
    <property type="term" value="F:identical protein binding"/>
    <property type="evidence" value="ECO:0007669"/>
    <property type="project" value="EnsemblFungi"/>
</dbReference>
<dbReference type="GO" id="GO:0046872">
    <property type="term" value="F:metal ion binding"/>
    <property type="evidence" value="ECO:0007669"/>
    <property type="project" value="UniProtKB-KW"/>
</dbReference>
<dbReference type="GO" id="GO:0044183">
    <property type="term" value="F:protein folding chaperone"/>
    <property type="evidence" value="ECO:0007669"/>
    <property type="project" value="EnsemblFungi"/>
</dbReference>
<dbReference type="GO" id="GO:0051082">
    <property type="term" value="F:unfolded protein binding"/>
    <property type="evidence" value="ECO:0007669"/>
    <property type="project" value="EnsemblFungi"/>
</dbReference>
<dbReference type="GO" id="GO:0034599">
    <property type="term" value="P:cellular response to oxidative stress"/>
    <property type="evidence" value="ECO:0007669"/>
    <property type="project" value="EnsemblFungi"/>
</dbReference>
<dbReference type="GO" id="GO:0000750">
    <property type="term" value="P:pheromone-dependent signal transduction involved in conjugation with cellular fusion"/>
    <property type="evidence" value="ECO:0007669"/>
    <property type="project" value="EnsemblFungi"/>
</dbReference>
<dbReference type="GO" id="GO:0006620">
    <property type="term" value="P:post-translational protein targeting to endoplasmic reticulum membrane"/>
    <property type="evidence" value="ECO:0007669"/>
    <property type="project" value="EnsemblFungi"/>
</dbReference>
<dbReference type="GO" id="GO:0009408">
    <property type="term" value="P:response to heat"/>
    <property type="evidence" value="ECO:0007669"/>
    <property type="project" value="EnsemblFungi"/>
</dbReference>
<dbReference type="GO" id="GO:0010038">
    <property type="term" value="P:response to metal ion"/>
    <property type="evidence" value="ECO:0007669"/>
    <property type="project" value="EnsemblFungi"/>
</dbReference>
<dbReference type="GO" id="GO:0006890">
    <property type="term" value="P:retrograde vesicle-mediated transport, Golgi to endoplasmic reticulum"/>
    <property type="evidence" value="ECO:0007669"/>
    <property type="project" value="EnsemblFungi"/>
</dbReference>
<dbReference type="GO" id="GO:0071816">
    <property type="term" value="P:tail-anchored membrane protein insertion into ER membrane"/>
    <property type="evidence" value="ECO:0000318"/>
    <property type="project" value="GO_Central"/>
</dbReference>
<dbReference type="CDD" id="cd02035">
    <property type="entry name" value="ArsA"/>
    <property type="match status" value="1"/>
</dbReference>
<dbReference type="FunFam" id="3.40.50.300:FF:000235">
    <property type="entry name" value="ATPase ASNA1"/>
    <property type="match status" value="1"/>
</dbReference>
<dbReference type="Gene3D" id="3.40.50.300">
    <property type="entry name" value="P-loop containing nucleotide triphosphate hydrolases"/>
    <property type="match status" value="1"/>
</dbReference>
<dbReference type="HAMAP" id="MF_03112">
    <property type="entry name" value="Asna1_Get3"/>
    <property type="match status" value="1"/>
</dbReference>
<dbReference type="InterPro" id="IPR025723">
    <property type="entry name" value="Anion-transp_ATPase-like_dom"/>
</dbReference>
<dbReference type="InterPro" id="IPR016300">
    <property type="entry name" value="ATPase_ArsA/GET3"/>
</dbReference>
<dbReference type="InterPro" id="IPR027542">
    <property type="entry name" value="ATPase_ArsA/GET3_euk"/>
</dbReference>
<dbReference type="InterPro" id="IPR027417">
    <property type="entry name" value="P-loop_NTPase"/>
</dbReference>
<dbReference type="NCBIfam" id="TIGR00345">
    <property type="entry name" value="GET3_arsA_TRC40"/>
    <property type="match status" value="1"/>
</dbReference>
<dbReference type="PANTHER" id="PTHR10803">
    <property type="entry name" value="ARSENICAL PUMP-DRIVING ATPASE ARSENITE-TRANSLOCATING ATPASE"/>
    <property type="match status" value="1"/>
</dbReference>
<dbReference type="PANTHER" id="PTHR10803:SF3">
    <property type="entry name" value="ATPASE GET3"/>
    <property type="match status" value="1"/>
</dbReference>
<dbReference type="Pfam" id="PF02374">
    <property type="entry name" value="ArsA_ATPase"/>
    <property type="match status" value="1"/>
</dbReference>
<dbReference type="SUPFAM" id="SSF52540">
    <property type="entry name" value="P-loop containing nucleoside triphosphate hydrolases"/>
    <property type="match status" value="1"/>
</dbReference>
<feature type="chain" id="PRO_0000388207" description="ATPase get3">
    <location>
        <begin position="1"/>
        <end position="340"/>
    </location>
</feature>
<feature type="active site" evidence="1">
    <location>
        <position position="63"/>
    </location>
</feature>
<feature type="binding site" evidence="1">
    <location>
        <begin position="34"/>
        <end position="41"/>
    </location>
    <ligand>
        <name>ATP</name>
        <dbReference type="ChEBI" id="CHEBI:30616"/>
    </ligand>
</feature>
<feature type="binding site" evidence="1">
    <location>
        <position position="245"/>
    </location>
    <ligand>
        <name>ATP</name>
        <dbReference type="ChEBI" id="CHEBI:30616"/>
    </ligand>
</feature>
<feature type="binding site" evidence="1">
    <location>
        <position position="272"/>
    </location>
    <ligand>
        <name>ATP</name>
        <dbReference type="ChEBI" id="CHEBI:30616"/>
    </ligand>
</feature>
<feature type="binding site" evidence="1">
    <location>
        <position position="283"/>
    </location>
    <ligand>
        <name>Zn(2+)</name>
        <dbReference type="ChEBI" id="CHEBI:29105"/>
        <note>ligand shared between dimeric partners</note>
    </ligand>
</feature>
<feature type="binding site" evidence="1">
    <location>
        <position position="286"/>
    </location>
    <ligand>
        <name>Zn(2+)</name>
        <dbReference type="ChEBI" id="CHEBI:29105"/>
        <note>ligand shared between dimeric partners</note>
    </ligand>
</feature>
<protein>
    <recommendedName>
        <fullName evidence="1">ATPase get3</fullName>
        <ecNumber evidence="1">3.6.-.-</ecNumber>
    </recommendedName>
    <alternativeName>
        <fullName evidence="1">Arsenical pump-driving ATPase</fullName>
    </alternativeName>
    <alternativeName>
        <fullName evidence="1">Arsenite-stimulated ATPase</fullName>
    </alternativeName>
    <alternativeName>
        <fullName evidence="1">Golgi to ER traffic protein 3</fullName>
    </alternativeName>
    <alternativeName>
        <fullName evidence="1">Guided entry of tail-anchored proteins 3</fullName>
    </alternativeName>
</protein>